<comment type="function">
    <text evidence="1">Probable transcription factor that promotes early floral meristem identity in synergy with APETALA1, FRUITFULL and LEAFY. Is required subsequently for the transition of an inflorescence meristem into a floral meristem. Seems to be partially redundant to the function of APETALA1 (By similarity).</text>
</comment>
<comment type="subunit">
    <text evidence="1">Homodimer capable of binding to CArG-box sequences.</text>
</comment>
<comment type="subcellular location">
    <subcellularLocation>
        <location evidence="2">Nucleus</location>
    </subcellularLocation>
</comment>
<comment type="miscellaneous">
    <text>This is a truncated version of CAULIFLOWER that may contribute to the 'cauliflower'-shaped floral meristem (curd). This trait has likely been selected by early farmers during the domestication of modified inflorescence structures.</text>
</comment>
<protein>
    <recommendedName>
        <fullName>Truncated transcription factor CAULIFLOWER C</fullName>
        <shortName>BobCAL-c</shortName>
    </recommendedName>
    <alternativeName>
        <fullName>Agamous-like MADS-box protein CAL-C</fullName>
    </alternativeName>
</protein>
<proteinExistence type="evidence at transcript level"/>
<sequence>MGRGRVEMKRIENKINRQVTFSKRRAGLLKKAHEISILCDAEVSLIVFSHKGKLFEYSSESCMEKVLERYERYSYAEKQLKAPDSHVNAQTNWSMEYSRLKAKIELWERNQRHYLGEDLESISIKELQNLEQQLDTSLKHIPSRKVCK</sequence>
<reference key="1">
    <citation type="submission" date="2003-12" db="EMBL/GenBank/DDBJ databases">
        <authorList>
            <person name="He Y.-K."/>
            <person name="Cao W.-G."/>
            <person name="Shen R.-J."/>
            <person name="Liu P.-L."/>
        </authorList>
    </citation>
    <scope>NUCLEOTIDE SEQUENCE [MRNA]</scope>
    <source>
        <tissue>Flower meristem</tissue>
    </source>
</reference>
<reference key="2">
    <citation type="journal article" date="2000" name="Genetics">
        <title>Variation and selection at the CAULIFLOWER floral homeotic gene accompanying the evolution of domesticated Brassica oleracea.</title>
        <authorList>
            <person name="Purugganan M.D."/>
            <person name="Boyles A.L."/>
            <person name="Suddith J.I."/>
        </authorList>
    </citation>
    <scope>REVIEW</scope>
    <scope>GENE FAMILY</scope>
</reference>
<keyword id="KW-0010">Activator</keyword>
<keyword id="KW-0175">Coiled coil</keyword>
<keyword id="KW-0217">Developmental protein</keyword>
<keyword id="KW-0221">Differentiation</keyword>
<keyword id="KW-0238">DNA-binding</keyword>
<keyword id="KW-0287">Flowering</keyword>
<keyword id="KW-0539">Nucleus</keyword>
<keyword id="KW-0804">Transcription</keyword>
<keyword id="KW-0805">Transcription regulation</keyword>
<gene>
    <name type="primary">CAL-C</name>
</gene>
<feature type="chain" id="PRO_0000417142" description="Truncated transcription factor CAULIFLOWER C">
    <location>
        <begin position="1"/>
        <end position="148"/>
    </location>
</feature>
<feature type="domain" description="MADS-box" evidence="2">
    <location>
        <begin position="1"/>
        <end position="61"/>
    </location>
</feature>
<feature type="domain" description="K-box; partial" evidence="3">
    <location>
        <begin position="90"/>
        <end position="148"/>
    </location>
</feature>
<evidence type="ECO:0000250" key="1"/>
<evidence type="ECO:0000255" key="2">
    <source>
        <dbReference type="PROSITE-ProRule" id="PRU00251"/>
    </source>
</evidence>
<evidence type="ECO:0000255" key="3">
    <source>
        <dbReference type="PROSITE-ProRule" id="PRU00629"/>
    </source>
</evidence>
<organism>
    <name type="scientific">Brassica oleracea var. botrytis</name>
    <name type="common">Cauliflower</name>
    <dbReference type="NCBI Taxonomy" id="3715"/>
    <lineage>
        <taxon>Eukaryota</taxon>
        <taxon>Viridiplantae</taxon>
        <taxon>Streptophyta</taxon>
        <taxon>Embryophyta</taxon>
        <taxon>Tracheophyta</taxon>
        <taxon>Spermatophyta</taxon>
        <taxon>Magnoliopsida</taxon>
        <taxon>eudicotyledons</taxon>
        <taxon>Gunneridae</taxon>
        <taxon>Pentapetalae</taxon>
        <taxon>rosids</taxon>
        <taxon>malvids</taxon>
        <taxon>Brassicales</taxon>
        <taxon>Brassicaceae</taxon>
        <taxon>Brassiceae</taxon>
        <taxon>Brassica</taxon>
    </lineage>
</organism>
<name>CALC_BRAOB</name>
<accession>Q6R4R7</accession>
<dbReference type="EMBL" id="AY514054">
    <property type="protein sequence ID" value="AAS67312.1"/>
    <property type="molecule type" value="mRNA"/>
</dbReference>
<dbReference type="SMR" id="Q6R4R7"/>
<dbReference type="GO" id="GO:0005634">
    <property type="term" value="C:nucleus"/>
    <property type="evidence" value="ECO:0007669"/>
    <property type="project" value="UniProtKB-SubCell"/>
</dbReference>
<dbReference type="GO" id="GO:0003700">
    <property type="term" value="F:DNA-binding transcription factor activity"/>
    <property type="evidence" value="ECO:0007669"/>
    <property type="project" value="InterPro"/>
</dbReference>
<dbReference type="GO" id="GO:0046983">
    <property type="term" value="F:protein dimerization activity"/>
    <property type="evidence" value="ECO:0007669"/>
    <property type="project" value="InterPro"/>
</dbReference>
<dbReference type="GO" id="GO:0000977">
    <property type="term" value="F:RNA polymerase II transcription regulatory region sequence-specific DNA binding"/>
    <property type="evidence" value="ECO:0007669"/>
    <property type="project" value="InterPro"/>
</dbReference>
<dbReference type="GO" id="GO:0030154">
    <property type="term" value="P:cell differentiation"/>
    <property type="evidence" value="ECO:0007669"/>
    <property type="project" value="UniProtKB-KW"/>
</dbReference>
<dbReference type="GO" id="GO:0009908">
    <property type="term" value="P:flower development"/>
    <property type="evidence" value="ECO:0007669"/>
    <property type="project" value="UniProtKB-KW"/>
</dbReference>
<dbReference type="GO" id="GO:0045944">
    <property type="term" value="P:positive regulation of transcription by RNA polymerase II"/>
    <property type="evidence" value="ECO:0007669"/>
    <property type="project" value="InterPro"/>
</dbReference>
<dbReference type="CDD" id="cd00265">
    <property type="entry name" value="MADS_MEF2_like"/>
    <property type="match status" value="1"/>
</dbReference>
<dbReference type="FunFam" id="3.40.1810.10:FF:000003">
    <property type="entry name" value="MADS-box transcription factor MADS-MC"/>
    <property type="match status" value="1"/>
</dbReference>
<dbReference type="Gene3D" id="3.40.1810.10">
    <property type="entry name" value="Transcription factor, MADS-box"/>
    <property type="match status" value="1"/>
</dbReference>
<dbReference type="InterPro" id="IPR050142">
    <property type="entry name" value="MADS-box/MEF2_TF"/>
</dbReference>
<dbReference type="InterPro" id="IPR033896">
    <property type="entry name" value="MEF2-like_N"/>
</dbReference>
<dbReference type="InterPro" id="IPR002487">
    <property type="entry name" value="TF_Kbox"/>
</dbReference>
<dbReference type="InterPro" id="IPR002100">
    <property type="entry name" value="TF_MADSbox"/>
</dbReference>
<dbReference type="InterPro" id="IPR036879">
    <property type="entry name" value="TF_MADSbox_sf"/>
</dbReference>
<dbReference type="PANTHER" id="PTHR48019">
    <property type="entry name" value="SERUM RESPONSE FACTOR HOMOLOG"/>
    <property type="match status" value="1"/>
</dbReference>
<dbReference type="Pfam" id="PF01486">
    <property type="entry name" value="K-box"/>
    <property type="match status" value="1"/>
</dbReference>
<dbReference type="Pfam" id="PF00319">
    <property type="entry name" value="SRF-TF"/>
    <property type="match status" value="1"/>
</dbReference>
<dbReference type="PRINTS" id="PR00404">
    <property type="entry name" value="MADSDOMAIN"/>
</dbReference>
<dbReference type="SMART" id="SM00432">
    <property type="entry name" value="MADS"/>
    <property type="match status" value="1"/>
</dbReference>
<dbReference type="SUPFAM" id="SSF55455">
    <property type="entry name" value="SRF-like"/>
    <property type="match status" value="1"/>
</dbReference>
<dbReference type="PROSITE" id="PS51297">
    <property type="entry name" value="K_BOX"/>
    <property type="match status" value="1"/>
</dbReference>
<dbReference type="PROSITE" id="PS00350">
    <property type="entry name" value="MADS_BOX_1"/>
    <property type="match status" value="1"/>
</dbReference>
<dbReference type="PROSITE" id="PS50066">
    <property type="entry name" value="MADS_BOX_2"/>
    <property type="match status" value="1"/>
</dbReference>